<name>GCH1_MYCLB</name>
<gene>
    <name evidence="1" type="primary">folE</name>
    <name type="ordered locus">MLBr00223</name>
</gene>
<keyword id="KW-0342">GTP-binding</keyword>
<keyword id="KW-0378">Hydrolase</keyword>
<keyword id="KW-0479">Metal-binding</keyword>
<keyword id="KW-0547">Nucleotide-binding</keyword>
<keyword id="KW-0554">One-carbon metabolism</keyword>
<keyword id="KW-0862">Zinc</keyword>
<accession>B8ZU42</accession>
<feature type="chain" id="PRO_1000124923" description="GTP cyclohydrolase 1">
    <location>
        <begin position="1"/>
        <end position="205"/>
    </location>
</feature>
<feature type="binding site" evidence="1">
    <location>
        <position position="93"/>
    </location>
    <ligand>
        <name>Zn(2+)</name>
        <dbReference type="ChEBI" id="CHEBI:29105"/>
    </ligand>
</feature>
<feature type="binding site" evidence="1">
    <location>
        <position position="96"/>
    </location>
    <ligand>
        <name>Zn(2+)</name>
        <dbReference type="ChEBI" id="CHEBI:29105"/>
    </ligand>
</feature>
<feature type="binding site" evidence="1">
    <location>
        <position position="166"/>
    </location>
    <ligand>
        <name>Zn(2+)</name>
        <dbReference type="ChEBI" id="CHEBI:29105"/>
    </ligand>
</feature>
<proteinExistence type="inferred from homology"/>
<dbReference type="EC" id="3.5.4.16" evidence="1"/>
<dbReference type="EMBL" id="FM211192">
    <property type="protein sequence ID" value="CAR70316.1"/>
    <property type="molecule type" value="Genomic_DNA"/>
</dbReference>
<dbReference type="SMR" id="B8ZU42"/>
<dbReference type="KEGG" id="mlb:MLBr00223"/>
<dbReference type="HOGENOM" id="CLU_049768_3_3_11"/>
<dbReference type="UniPathway" id="UPA00848">
    <property type="reaction ID" value="UER00151"/>
</dbReference>
<dbReference type="Proteomes" id="UP000006900">
    <property type="component" value="Chromosome"/>
</dbReference>
<dbReference type="GO" id="GO:0005737">
    <property type="term" value="C:cytoplasm"/>
    <property type="evidence" value="ECO:0007669"/>
    <property type="project" value="TreeGrafter"/>
</dbReference>
<dbReference type="GO" id="GO:0005525">
    <property type="term" value="F:GTP binding"/>
    <property type="evidence" value="ECO:0007669"/>
    <property type="project" value="UniProtKB-KW"/>
</dbReference>
<dbReference type="GO" id="GO:0003934">
    <property type="term" value="F:GTP cyclohydrolase I activity"/>
    <property type="evidence" value="ECO:0007669"/>
    <property type="project" value="UniProtKB-UniRule"/>
</dbReference>
<dbReference type="GO" id="GO:0008270">
    <property type="term" value="F:zinc ion binding"/>
    <property type="evidence" value="ECO:0007669"/>
    <property type="project" value="UniProtKB-UniRule"/>
</dbReference>
<dbReference type="GO" id="GO:0006730">
    <property type="term" value="P:one-carbon metabolic process"/>
    <property type="evidence" value="ECO:0007669"/>
    <property type="project" value="UniProtKB-UniRule"/>
</dbReference>
<dbReference type="GO" id="GO:0006729">
    <property type="term" value="P:tetrahydrobiopterin biosynthetic process"/>
    <property type="evidence" value="ECO:0007669"/>
    <property type="project" value="TreeGrafter"/>
</dbReference>
<dbReference type="GO" id="GO:0046654">
    <property type="term" value="P:tetrahydrofolate biosynthetic process"/>
    <property type="evidence" value="ECO:0007669"/>
    <property type="project" value="UniProtKB-UniRule"/>
</dbReference>
<dbReference type="FunFam" id="1.10.286.10:FF:000001">
    <property type="entry name" value="GTP cyclohydrolase 1"/>
    <property type="match status" value="1"/>
</dbReference>
<dbReference type="FunFam" id="3.30.1130.10:FF:000001">
    <property type="entry name" value="GTP cyclohydrolase 1"/>
    <property type="match status" value="1"/>
</dbReference>
<dbReference type="Gene3D" id="1.10.286.10">
    <property type="match status" value="1"/>
</dbReference>
<dbReference type="Gene3D" id="3.30.1130.10">
    <property type="match status" value="1"/>
</dbReference>
<dbReference type="HAMAP" id="MF_00223">
    <property type="entry name" value="FolE"/>
    <property type="match status" value="1"/>
</dbReference>
<dbReference type="InterPro" id="IPR043133">
    <property type="entry name" value="GTP-CH-I_C/QueF"/>
</dbReference>
<dbReference type="InterPro" id="IPR043134">
    <property type="entry name" value="GTP-CH-I_N"/>
</dbReference>
<dbReference type="InterPro" id="IPR001474">
    <property type="entry name" value="GTP_CycHdrlase_I"/>
</dbReference>
<dbReference type="InterPro" id="IPR018234">
    <property type="entry name" value="GTP_CycHdrlase_I_CS"/>
</dbReference>
<dbReference type="InterPro" id="IPR020602">
    <property type="entry name" value="GTP_CycHdrlase_I_dom"/>
</dbReference>
<dbReference type="NCBIfam" id="TIGR00063">
    <property type="entry name" value="folE"/>
    <property type="match status" value="1"/>
</dbReference>
<dbReference type="NCBIfam" id="NF006825">
    <property type="entry name" value="PRK09347.1-2"/>
    <property type="match status" value="1"/>
</dbReference>
<dbReference type="NCBIfam" id="NF006826">
    <property type="entry name" value="PRK09347.1-3"/>
    <property type="match status" value="1"/>
</dbReference>
<dbReference type="PANTHER" id="PTHR11109:SF7">
    <property type="entry name" value="GTP CYCLOHYDROLASE 1"/>
    <property type="match status" value="1"/>
</dbReference>
<dbReference type="PANTHER" id="PTHR11109">
    <property type="entry name" value="GTP CYCLOHYDROLASE I"/>
    <property type="match status" value="1"/>
</dbReference>
<dbReference type="Pfam" id="PF01227">
    <property type="entry name" value="GTP_cyclohydroI"/>
    <property type="match status" value="1"/>
</dbReference>
<dbReference type="SUPFAM" id="SSF55620">
    <property type="entry name" value="Tetrahydrobiopterin biosynthesis enzymes-like"/>
    <property type="match status" value="1"/>
</dbReference>
<dbReference type="PROSITE" id="PS00859">
    <property type="entry name" value="GTP_CYCLOHYDROL_1_1"/>
    <property type="match status" value="1"/>
</dbReference>
<dbReference type="PROSITE" id="PS00860">
    <property type="entry name" value="GTP_CYCLOHYDROL_1_2"/>
    <property type="match status" value="1"/>
</dbReference>
<evidence type="ECO:0000255" key="1">
    <source>
        <dbReference type="HAMAP-Rule" id="MF_00223"/>
    </source>
</evidence>
<reference key="1">
    <citation type="journal article" date="2009" name="Nat. Genet.">
        <title>Comparative genomic and phylogeographic analysis of Mycobacterium leprae.</title>
        <authorList>
            <person name="Monot M."/>
            <person name="Honore N."/>
            <person name="Garnier T."/>
            <person name="Zidane N."/>
            <person name="Sherafi D."/>
            <person name="Paniz-Mondolfi A."/>
            <person name="Matsuoka M."/>
            <person name="Taylor G.M."/>
            <person name="Donoghue H.D."/>
            <person name="Bouwman A."/>
            <person name="Mays S."/>
            <person name="Watson C."/>
            <person name="Lockwood D."/>
            <person name="Khamispour A."/>
            <person name="Dowlati Y."/>
            <person name="Jianping S."/>
            <person name="Rea T.H."/>
            <person name="Vera-Cabrera L."/>
            <person name="Stefani M.M."/>
            <person name="Banu S."/>
            <person name="Macdonald M."/>
            <person name="Sapkota B.R."/>
            <person name="Spencer J.S."/>
            <person name="Thomas J."/>
            <person name="Harshman K."/>
            <person name="Singh P."/>
            <person name="Busso P."/>
            <person name="Gattiker A."/>
            <person name="Rougemont J."/>
            <person name="Brennan P.J."/>
            <person name="Cole S.T."/>
        </authorList>
    </citation>
    <scope>NUCLEOTIDE SEQUENCE [LARGE SCALE GENOMIC DNA]</scope>
    <source>
        <strain>Br4923</strain>
    </source>
</reference>
<protein>
    <recommendedName>
        <fullName evidence="1">GTP cyclohydrolase 1</fullName>
        <ecNumber evidence="1">3.5.4.16</ecNumber>
    </recommendedName>
    <alternativeName>
        <fullName evidence="1">GTP cyclohydrolase I</fullName>
        <shortName evidence="1">GTP-CH-I</shortName>
    </alternativeName>
</protein>
<sequence length="205" mass="22531">MALLDLGLESTAVPRIRVFDQQRAEAAIRELLYAIGEDPDREGLADTPARVARACRELFSGLYTDPQTVLNTMFDEEHNELVIVKEIPMYSTCEHHLVSFHGVAHIGYLPGADGRVTGLSKIARLVDLYAKRPQVQERLTSQIADALVSKLDPRGVIIVVEAEHLCMAMRGVRKPGAITTTSAVRGQFKTDAASRAEALGLILRK</sequence>
<comment type="catalytic activity">
    <reaction evidence="1">
        <text>GTP + H2O = 7,8-dihydroneopterin 3'-triphosphate + formate + H(+)</text>
        <dbReference type="Rhea" id="RHEA:17473"/>
        <dbReference type="ChEBI" id="CHEBI:15377"/>
        <dbReference type="ChEBI" id="CHEBI:15378"/>
        <dbReference type="ChEBI" id="CHEBI:15740"/>
        <dbReference type="ChEBI" id="CHEBI:37565"/>
        <dbReference type="ChEBI" id="CHEBI:58462"/>
        <dbReference type="EC" id="3.5.4.16"/>
    </reaction>
</comment>
<comment type="pathway">
    <text evidence="1">Cofactor biosynthesis; 7,8-dihydroneopterin triphosphate biosynthesis; 7,8-dihydroneopterin triphosphate from GTP: step 1/1.</text>
</comment>
<comment type="subunit">
    <text evidence="1">Homomer.</text>
</comment>
<comment type="similarity">
    <text evidence="1">Belongs to the GTP cyclohydrolase I family.</text>
</comment>
<organism>
    <name type="scientific">Mycobacterium leprae (strain Br4923)</name>
    <dbReference type="NCBI Taxonomy" id="561304"/>
    <lineage>
        <taxon>Bacteria</taxon>
        <taxon>Bacillati</taxon>
        <taxon>Actinomycetota</taxon>
        <taxon>Actinomycetes</taxon>
        <taxon>Mycobacteriales</taxon>
        <taxon>Mycobacteriaceae</taxon>
        <taxon>Mycobacterium</taxon>
    </lineage>
</organism>